<keyword id="KW-0963">Cytoplasm</keyword>
<keyword id="KW-0226">DNA condensation</keyword>
<keyword id="KW-0238">DNA-binding</keyword>
<keyword id="KW-0408">Iron</keyword>
<keyword id="KW-0409">Iron storage</keyword>
<keyword id="KW-0479">Metal-binding</keyword>
<keyword id="KW-0560">Oxidoreductase</keyword>
<keyword id="KW-1185">Reference proteome</keyword>
<accession>A8AIW9</accession>
<comment type="function">
    <text evidence="1">During stationary phase, binds the chromosome non-specifically, forming a highly ordered and stable dps-DNA co-crystal within which chromosomal DNA is condensed and protected from diverse damages. It protects DNA from oxidative damage by sequestering intracellular Fe(2+) ion and storing it in the form of Fe(3+) oxyhydroxide mineral, which can be released after reduction. One hydrogen peroxide oxidizes two Fe(2+) ions, which prevents hydroxyl radical production by the Fenton reaction.</text>
</comment>
<comment type="catalytic activity">
    <reaction evidence="1">
        <text>2 Fe(2+) + H2O2 + 2 H(+) = 2 Fe(3+) + 2 H2O</text>
        <dbReference type="Rhea" id="RHEA:48712"/>
        <dbReference type="ChEBI" id="CHEBI:15377"/>
        <dbReference type="ChEBI" id="CHEBI:15378"/>
        <dbReference type="ChEBI" id="CHEBI:16240"/>
        <dbReference type="ChEBI" id="CHEBI:29033"/>
        <dbReference type="ChEBI" id="CHEBI:29034"/>
    </reaction>
</comment>
<comment type="subunit">
    <text evidence="1">Homododecamer. The 12 subunits form a hollow sphere into which the mineral iron core of up to 500 Fe(3+) can be deposited.</text>
</comment>
<comment type="subcellular location">
    <subcellularLocation>
        <location evidence="1">Cytoplasm</location>
    </subcellularLocation>
</comment>
<comment type="similarity">
    <text evidence="1">Belongs to the Dps family.</text>
</comment>
<proteinExistence type="inferred from homology"/>
<organism>
    <name type="scientific">Citrobacter koseri (strain ATCC BAA-895 / CDC 4225-83 / SGSC4696)</name>
    <dbReference type="NCBI Taxonomy" id="290338"/>
    <lineage>
        <taxon>Bacteria</taxon>
        <taxon>Pseudomonadati</taxon>
        <taxon>Pseudomonadota</taxon>
        <taxon>Gammaproteobacteria</taxon>
        <taxon>Enterobacterales</taxon>
        <taxon>Enterobacteriaceae</taxon>
        <taxon>Citrobacter</taxon>
    </lineage>
</organism>
<sequence length="167" mass="18706">MSTAKLVKTKASNLLYTRNDVSDSDKKATVELLNRQVIQFIDLSLITKQAHWNMRGANFIAVHEMLDGFRTALTDHLDTMAERAVQLGGVALGTTQVINSKTPLKSYPLDIHSVQDHLKELADRYSVVANDVRKAISEAKDEDTADIFTAASRDLDKFLWFIEANIE</sequence>
<protein>
    <recommendedName>
        <fullName evidence="1">DNA protection during starvation protein</fullName>
        <ecNumber evidence="1">1.16.-.-</ecNumber>
    </recommendedName>
</protein>
<dbReference type="EC" id="1.16.-.-" evidence="1"/>
<dbReference type="EMBL" id="CP000822">
    <property type="protein sequence ID" value="ABV13432.1"/>
    <property type="molecule type" value="Genomic_DNA"/>
</dbReference>
<dbReference type="RefSeq" id="WP_012133159.1">
    <property type="nucleotide sequence ID" value="NC_009792.1"/>
</dbReference>
<dbReference type="SMR" id="A8AIW9"/>
<dbReference type="STRING" id="290338.CKO_02310"/>
<dbReference type="GeneID" id="45136219"/>
<dbReference type="KEGG" id="cko:CKO_02310"/>
<dbReference type="HOGENOM" id="CLU_098183_1_2_6"/>
<dbReference type="OrthoDB" id="9797687at2"/>
<dbReference type="Proteomes" id="UP000008148">
    <property type="component" value="Chromosome"/>
</dbReference>
<dbReference type="GO" id="GO:0005737">
    <property type="term" value="C:cytoplasm"/>
    <property type="evidence" value="ECO:0007669"/>
    <property type="project" value="UniProtKB-SubCell"/>
</dbReference>
<dbReference type="GO" id="GO:0003677">
    <property type="term" value="F:DNA binding"/>
    <property type="evidence" value="ECO:0007669"/>
    <property type="project" value="UniProtKB-UniRule"/>
</dbReference>
<dbReference type="GO" id="GO:0008199">
    <property type="term" value="F:ferric iron binding"/>
    <property type="evidence" value="ECO:0007669"/>
    <property type="project" value="UniProtKB-UniRule"/>
</dbReference>
<dbReference type="GO" id="GO:0016722">
    <property type="term" value="F:oxidoreductase activity, acting on metal ions"/>
    <property type="evidence" value="ECO:0007669"/>
    <property type="project" value="InterPro"/>
</dbReference>
<dbReference type="GO" id="GO:0030261">
    <property type="term" value="P:chromosome condensation"/>
    <property type="evidence" value="ECO:0007669"/>
    <property type="project" value="UniProtKB-KW"/>
</dbReference>
<dbReference type="GO" id="GO:0006879">
    <property type="term" value="P:intracellular iron ion homeostasis"/>
    <property type="evidence" value="ECO:0007669"/>
    <property type="project" value="UniProtKB-KW"/>
</dbReference>
<dbReference type="CDD" id="cd01043">
    <property type="entry name" value="DPS"/>
    <property type="match status" value="1"/>
</dbReference>
<dbReference type="FunFam" id="1.20.1260.10:FF:000003">
    <property type="entry name" value="DNA protection during starvation protein"/>
    <property type="match status" value="1"/>
</dbReference>
<dbReference type="Gene3D" id="1.20.1260.10">
    <property type="match status" value="1"/>
</dbReference>
<dbReference type="HAMAP" id="MF_01441">
    <property type="entry name" value="Dps"/>
    <property type="match status" value="1"/>
</dbReference>
<dbReference type="InterPro" id="IPR002177">
    <property type="entry name" value="DPS_DNA-bd"/>
</dbReference>
<dbReference type="InterPro" id="IPR023188">
    <property type="entry name" value="DPS_DNA-bd_CS"/>
</dbReference>
<dbReference type="InterPro" id="IPR023067">
    <property type="entry name" value="Dps_gammaproteobac"/>
</dbReference>
<dbReference type="InterPro" id="IPR012347">
    <property type="entry name" value="Ferritin-like"/>
</dbReference>
<dbReference type="InterPro" id="IPR009078">
    <property type="entry name" value="Ferritin-like_SF"/>
</dbReference>
<dbReference type="InterPro" id="IPR008331">
    <property type="entry name" value="Ferritin_DPS_dom"/>
</dbReference>
<dbReference type="NCBIfam" id="NF006975">
    <property type="entry name" value="PRK09448.1"/>
    <property type="match status" value="1"/>
</dbReference>
<dbReference type="PANTHER" id="PTHR42932:SF3">
    <property type="entry name" value="DNA PROTECTION DURING STARVATION PROTEIN"/>
    <property type="match status" value="1"/>
</dbReference>
<dbReference type="PANTHER" id="PTHR42932">
    <property type="entry name" value="GENERAL STRESS PROTEIN 20U"/>
    <property type="match status" value="1"/>
</dbReference>
<dbReference type="Pfam" id="PF00210">
    <property type="entry name" value="Ferritin"/>
    <property type="match status" value="1"/>
</dbReference>
<dbReference type="PIRSF" id="PIRSF005900">
    <property type="entry name" value="Dps"/>
    <property type="match status" value="1"/>
</dbReference>
<dbReference type="PRINTS" id="PR01346">
    <property type="entry name" value="HELNAPAPROT"/>
</dbReference>
<dbReference type="SUPFAM" id="SSF47240">
    <property type="entry name" value="Ferritin-like"/>
    <property type="match status" value="1"/>
</dbReference>
<dbReference type="PROSITE" id="PS00818">
    <property type="entry name" value="DPS_1"/>
    <property type="match status" value="1"/>
</dbReference>
<dbReference type="PROSITE" id="PS00819">
    <property type="entry name" value="DPS_2"/>
    <property type="match status" value="1"/>
</dbReference>
<feature type="chain" id="PRO_1000024415" description="DNA protection during starvation protein">
    <location>
        <begin position="1"/>
        <end position="167"/>
    </location>
</feature>
<feature type="binding site" evidence="1">
    <location>
        <position position="51"/>
    </location>
    <ligand>
        <name>Fe cation</name>
        <dbReference type="ChEBI" id="CHEBI:24875"/>
    </ligand>
</feature>
<feature type="binding site" evidence="1">
    <location>
        <position position="78"/>
    </location>
    <ligand>
        <name>Fe cation</name>
        <dbReference type="ChEBI" id="CHEBI:24875"/>
    </ligand>
</feature>
<feature type="binding site" evidence="1">
    <location>
        <position position="82"/>
    </location>
    <ligand>
        <name>Fe cation</name>
        <dbReference type="ChEBI" id="CHEBI:24875"/>
    </ligand>
</feature>
<gene>
    <name evidence="1" type="primary">dps</name>
    <name type="ordered locus">CKO_02310</name>
</gene>
<reference key="1">
    <citation type="submission" date="2007-08" db="EMBL/GenBank/DDBJ databases">
        <authorList>
            <consortium name="The Citrobacter koseri Genome Sequencing Project"/>
            <person name="McClelland M."/>
            <person name="Sanderson E.K."/>
            <person name="Porwollik S."/>
            <person name="Spieth J."/>
            <person name="Clifton W.S."/>
            <person name="Latreille P."/>
            <person name="Courtney L."/>
            <person name="Wang C."/>
            <person name="Pepin K."/>
            <person name="Bhonagiri V."/>
            <person name="Nash W."/>
            <person name="Johnson M."/>
            <person name="Thiruvilangam P."/>
            <person name="Wilson R."/>
        </authorList>
    </citation>
    <scope>NUCLEOTIDE SEQUENCE [LARGE SCALE GENOMIC DNA]</scope>
    <source>
        <strain>ATCC BAA-895 / CDC 4225-83 / SGSC4696</strain>
    </source>
</reference>
<evidence type="ECO:0000255" key="1">
    <source>
        <dbReference type="HAMAP-Rule" id="MF_01441"/>
    </source>
</evidence>
<name>DPS_CITK8</name>